<sequence>MRTIAVLTSGGDAPGMNAAIRAVVRTGLEKGLKVMGIQRGYNGLINGEIFEMDTHSVSDIIQRGGTILRTARCEEFRTEQGREKAAKILKAFGIDGLVVIGGDGSFHGAQLLSKLGINTVGLPGTIDNDLAYTDYTIGFDTSINTVLDAINKLRDTSTSHERVSVVEVMGRNCGDIALYTGVAGGAESIIIPEKEYNADKLCKQILQGKLKGKMHNLVLLAEGVGGANELAKYIEEVTGIETRSTILGHIQRGGSPTCMDRILASRMAYKAVELLISGKSSRVVGIKNGKIIDMDIDEALAVERSFDQELYDIATILSK</sequence>
<proteinExistence type="inferred from homology"/>
<protein>
    <recommendedName>
        <fullName evidence="1">ATP-dependent 6-phosphofructokinase</fullName>
        <shortName evidence="1">ATP-PFK</shortName>
        <shortName evidence="1">Phosphofructokinase</shortName>
        <ecNumber evidence="1">2.7.1.11</ecNumber>
    </recommendedName>
    <alternativeName>
        <fullName evidence="1">Phosphohexokinase</fullName>
    </alternativeName>
</protein>
<comment type="function">
    <text evidence="1">Catalyzes the phosphorylation of D-fructose 6-phosphate to fructose 1,6-bisphosphate by ATP, the first committing step of glycolysis.</text>
</comment>
<comment type="catalytic activity">
    <reaction evidence="1">
        <text>beta-D-fructose 6-phosphate + ATP = beta-D-fructose 1,6-bisphosphate + ADP + H(+)</text>
        <dbReference type="Rhea" id="RHEA:16109"/>
        <dbReference type="ChEBI" id="CHEBI:15378"/>
        <dbReference type="ChEBI" id="CHEBI:30616"/>
        <dbReference type="ChEBI" id="CHEBI:32966"/>
        <dbReference type="ChEBI" id="CHEBI:57634"/>
        <dbReference type="ChEBI" id="CHEBI:456216"/>
        <dbReference type="EC" id="2.7.1.11"/>
    </reaction>
</comment>
<comment type="cofactor">
    <cofactor evidence="1">
        <name>Mg(2+)</name>
        <dbReference type="ChEBI" id="CHEBI:18420"/>
    </cofactor>
</comment>
<comment type="activity regulation">
    <text evidence="1">Allosterically activated by ADP and other diphosphonucleosides, and allosterically inhibited by phosphoenolpyruvate.</text>
</comment>
<comment type="pathway">
    <text evidence="1">Carbohydrate degradation; glycolysis; D-glyceraldehyde 3-phosphate and glycerone phosphate from D-glucose: step 3/4.</text>
</comment>
<comment type="subunit">
    <text evidence="1">Homotetramer.</text>
</comment>
<comment type="subcellular location">
    <subcellularLocation>
        <location evidence="1">Cytoplasm</location>
    </subcellularLocation>
</comment>
<comment type="similarity">
    <text evidence="1">Belongs to the phosphofructokinase type A (PFKA) family. ATP-dependent PFK group I subfamily. Prokaryotic clade 'B1' sub-subfamily.</text>
</comment>
<name>PFKA_CLOBH</name>
<feature type="chain" id="PRO_1000059752" description="ATP-dependent 6-phosphofructokinase">
    <location>
        <begin position="1"/>
        <end position="319"/>
    </location>
</feature>
<feature type="active site" description="Proton acceptor" evidence="1">
    <location>
        <position position="127"/>
    </location>
</feature>
<feature type="binding site" evidence="1">
    <location>
        <position position="11"/>
    </location>
    <ligand>
        <name>ATP</name>
        <dbReference type="ChEBI" id="CHEBI:30616"/>
    </ligand>
</feature>
<feature type="binding site" evidence="1">
    <location>
        <begin position="21"/>
        <end position="25"/>
    </location>
    <ligand>
        <name>ADP</name>
        <dbReference type="ChEBI" id="CHEBI:456216"/>
        <note>allosteric activator; ligand shared between dimeric partners</note>
    </ligand>
</feature>
<feature type="binding site" evidence="1">
    <location>
        <begin position="72"/>
        <end position="73"/>
    </location>
    <ligand>
        <name>ATP</name>
        <dbReference type="ChEBI" id="CHEBI:30616"/>
    </ligand>
</feature>
<feature type="binding site" evidence="1">
    <location>
        <begin position="102"/>
        <end position="105"/>
    </location>
    <ligand>
        <name>ATP</name>
        <dbReference type="ChEBI" id="CHEBI:30616"/>
    </ligand>
</feature>
<feature type="binding site" evidence="1">
    <location>
        <position position="103"/>
    </location>
    <ligand>
        <name>Mg(2+)</name>
        <dbReference type="ChEBI" id="CHEBI:18420"/>
        <note>catalytic</note>
    </ligand>
</feature>
<feature type="binding site" description="in other chain" evidence="1">
    <location>
        <begin position="125"/>
        <end position="127"/>
    </location>
    <ligand>
        <name>substrate</name>
        <note>ligand shared between dimeric partners</note>
    </ligand>
</feature>
<feature type="binding site" description="in other chain" evidence="1">
    <location>
        <position position="154"/>
    </location>
    <ligand>
        <name>ADP</name>
        <dbReference type="ChEBI" id="CHEBI:456216"/>
        <note>allosteric activator; ligand shared between dimeric partners</note>
    </ligand>
</feature>
<feature type="binding site" evidence="1">
    <location>
        <position position="162"/>
    </location>
    <ligand>
        <name>substrate</name>
        <note>ligand shared between dimeric partners</note>
    </ligand>
</feature>
<feature type="binding site" description="in other chain" evidence="1">
    <location>
        <begin position="169"/>
        <end position="171"/>
    </location>
    <ligand>
        <name>substrate</name>
        <note>ligand shared between dimeric partners</note>
    </ligand>
</feature>
<feature type="binding site" description="in other chain" evidence="1">
    <location>
        <begin position="185"/>
        <end position="187"/>
    </location>
    <ligand>
        <name>ADP</name>
        <dbReference type="ChEBI" id="CHEBI:456216"/>
        <note>allosteric activator; ligand shared between dimeric partners</note>
    </ligand>
</feature>
<feature type="binding site" description="in other chain" evidence="1">
    <location>
        <position position="211"/>
    </location>
    <ligand>
        <name>ADP</name>
        <dbReference type="ChEBI" id="CHEBI:456216"/>
        <note>allosteric activator; ligand shared between dimeric partners</note>
    </ligand>
</feature>
<feature type="binding site" description="in other chain" evidence="1">
    <location>
        <begin position="213"/>
        <end position="215"/>
    </location>
    <ligand>
        <name>ADP</name>
        <dbReference type="ChEBI" id="CHEBI:456216"/>
        <note>allosteric activator; ligand shared between dimeric partners</note>
    </ligand>
</feature>
<feature type="binding site" description="in other chain" evidence="1">
    <location>
        <position position="222"/>
    </location>
    <ligand>
        <name>substrate</name>
        <note>ligand shared between dimeric partners</note>
    </ligand>
</feature>
<feature type="binding site" evidence="1">
    <location>
        <position position="243"/>
    </location>
    <ligand>
        <name>substrate</name>
        <note>ligand shared between dimeric partners</note>
    </ligand>
</feature>
<feature type="binding site" description="in other chain" evidence="1">
    <location>
        <begin position="249"/>
        <end position="252"/>
    </location>
    <ligand>
        <name>substrate</name>
        <note>ligand shared between dimeric partners</note>
    </ligand>
</feature>
<dbReference type="EC" id="2.7.1.11" evidence="1"/>
<dbReference type="EMBL" id="CP000727">
    <property type="protein sequence ID" value="ABS39019.1"/>
    <property type="molecule type" value="Genomic_DNA"/>
</dbReference>
<dbReference type="EMBL" id="AM412317">
    <property type="protein sequence ID" value="CAL84932.1"/>
    <property type="molecule type" value="Genomic_DNA"/>
</dbReference>
<dbReference type="RefSeq" id="WP_003357588.1">
    <property type="nucleotide sequence ID" value="NC_009698.1"/>
</dbReference>
<dbReference type="RefSeq" id="YP_001255855.1">
    <property type="nucleotide sequence ID" value="NC_009495.1"/>
</dbReference>
<dbReference type="RefSeq" id="YP_001389096.1">
    <property type="nucleotide sequence ID" value="NC_009698.1"/>
</dbReference>
<dbReference type="SMR" id="A5I798"/>
<dbReference type="GeneID" id="5184682"/>
<dbReference type="KEGG" id="cbh:CLC_3316"/>
<dbReference type="KEGG" id="cbo:CBO3373"/>
<dbReference type="PATRIC" id="fig|413999.7.peg.3347"/>
<dbReference type="HOGENOM" id="CLU_020655_0_1_9"/>
<dbReference type="UniPathway" id="UPA00109">
    <property type="reaction ID" value="UER00182"/>
</dbReference>
<dbReference type="PRO" id="PR:A5I798"/>
<dbReference type="Proteomes" id="UP000001986">
    <property type="component" value="Chromosome"/>
</dbReference>
<dbReference type="GO" id="GO:0005737">
    <property type="term" value="C:cytoplasm"/>
    <property type="evidence" value="ECO:0007669"/>
    <property type="project" value="UniProtKB-SubCell"/>
</dbReference>
<dbReference type="GO" id="GO:0003872">
    <property type="term" value="F:6-phosphofructokinase activity"/>
    <property type="evidence" value="ECO:0007669"/>
    <property type="project" value="UniProtKB-UniRule"/>
</dbReference>
<dbReference type="GO" id="GO:0005524">
    <property type="term" value="F:ATP binding"/>
    <property type="evidence" value="ECO:0007669"/>
    <property type="project" value="UniProtKB-KW"/>
</dbReference>
<dbReference type="GO" id="GO:0046872">
    <property type="term" value="F:metal ion binding"/>
    <property type="evidence" value="ECO:0007669"/>
    <property type="project" value="UniProtKB-KW"/>
</dbReference>
<dbReference type="GO" id="GO:0006002">
    <property type="term" value="P:fructose 6-phosphate metabolic process"/>
    <property type="evidence" value="ECO:0007669"/>
    <property type="project" value="InterPro"/>
</dbReference>
<dbReference type="FunFam" id="3.40.50.450:FF:000001">
    <property type="entry name" value="ATP-dependent 6-phosphofructokinase"/>
    <property type="match status" value="1"/>
</dbReference>
<dbReference type="FunFam" id="3.40.50.460:FF:000002">
    <property type="entry name" value="ATP-dependent 6-phosphofructokinase"/>
    <property type="match status" value="1"/>
</dbReference>
<dbReference type="Gene3D" id="3.40.50.450">
    <property type="match status" value="1"/>
</dbReference>
<dbReference type="Gene3D" id="3.40.50.460">
    <property type="entry name" value="Phosphofructokinase domain"/>
    <property type="match status" value="1"/>
</dbReference>
<dbReference type="HAMAP" id="MF_00339">
    <property type="entry name" value="Phosphofructokinase_I_B1"/>
    <property type="match status" value="1"/>
</dbReference>
<dbReference type="InterPro" id="IPR022953">
    <property type="entry name" value="ATP_PFK"/>
</dbReference>
<dbReference type="InterPro" id="IPR012003">
    <property type="entry name" value="ATP_PFK_prok-type"/>
</dbReference>
<dbReference type="InterPro" id="IPR012828">
    <property type="entry name" value="PFKA_ATP_prok"/>
</dbReference>
<dbReference type="InterPro" id="IPR015912">
    <property type="entry name" value="Phosphofructokinase_CS"/>
</dbReference>
<dbReference type="InterPro" id="IPR000023">
    <property type="entry name" value="Phosphofructokinase_dom"/>
</dbReference>
<dbReference type="InterPro" id="IPR035966">
    <property type="entry name" value="PKF_sf"/>
</dbReference>
<dbReference type="NCBIfam" id="TIGR02482">
    <property type="entry name" value="PFKA_ATP"/>
    <property type="match status" value="1"/>
</dbReference>
<dbReference type="NCBIfam" id="NF002872">
    <property type="entry name" value="PRK03202.1"/>
    <property type="match status" value="1"/>
</dbReference>
<dbReference type="PANTHER" id="PTHR13697:SF4">
    <property type="entry name" value="ATP-DEPENDENT 6-PHOSPHOFRUCTOKINASE"/>
    <property type="match status" value="1"/>
</dbReference>
<dbReference type="PANTHER" id="PTHR13697">
    <property type="entry name" value="PHOSPHOFRUCTOKINASE"/>
    <property type="match status" value="1"/>
</dbReference>
<dbReference type="Pfam" id="PF00365">
    <property type="entry name" value="PFK"/>
    <property type="match status" value="1"/>
</dbReference>
<dbReference type="PIRSF" id="PIRSF000532">
    <property type="entry name" value="ATP_PFK_prok"/>
    <property type="match status" value="1"/>
</dbReference>
<dbReference type="PRINTS" id="PR00476">
    <property type="entry name" value="PHFRCTKINASE"/>
</dbReference>
<dbReference type="SUPFAM" id="SSF53784">
    <property type="entry name" value="Phosphofructokinase"/>
    <property type="match status" value="1"/>
</dbReference>
<dbReference type="PROSITE" id="PS00433">
    <property type="entry name" value="PHOSPHOFRUCTOKINASE"/>
    <property type="match status" value="1"/>
</dbReference>
<evidence type="ECO:0000255" key="1">
    <source>
        <dbReference type="HAMAP-Rule" id="MF_00339"/>
    </source>
</evidence>
<organism>
    <name type="scientific">Clostridium botulinum (strain Hall / ATCC 3502 / NCTC 13319 / Type A)</name>
    <dbReference type="NCBI Taxonomy" id="441771"/>
    <lineage>
        <taxon>Bacteria</taxon>
        <taxon>Bacillati</taxon>
        <taxon>Bacillota</taxon>
        <taxon>Clostridia</taxon>
        <taxon>Eubacteriales</taxon>
        <taxon>Clostridiaceae</taxon>
        <taxon>Clostridium</taxon>
    </lineage>
</organism>
<gene>
    <name evidence="1" type="primary">pfkA</name>
    <name type="ordered locus">CBO3373</name>
    <name type="ordered locus">CLC_3316</name>
</gene>
<reference key="1">
    <citation type="journal article" date="2007" name="Genome Res.">
        <title>Genome sequence of a proteolytic (Group I) Clostridium botulinum strain Hall A and comparative analysis of the clostridial genomes.</title>
        <authorList>
            <person name="Sebaihia M."/>
            <person name="Peck M.W."/>
            <person name="Minton N.P."/>
            <person name="Thomson N.R."/>
            <person name="Holden M.T.G."/>
            <person name="Mitchell W.J."/>
            <person name="Carter A.T."/>
            <person name="Bentley S.D."/>
            <person name="Mason D.R."/>
            <person name="Crossman L."/>
            <person name="Paul C.J."/>
            <person name="Ivens A."/>
            <person name="Wells-Bennik M.H.J."/>
            <person name="Davis I.J."/>
            <person name="Cerdeno-Tarraga A.M."/>
            <person name="Churcher C."/>
            <person name="Quail M.A."/>
            <person name="Chillingworth T."/>
            <person name="Feltwell T."/>
            <person name="Fraser A."/>
            <person name="Goodhead I."/>
            <person name="Hance Z."/>
            <person name="Jagels K."/>
            <person name="Larke N."/>
            <person name="Maddison M."/>
            <person name="Moule S."/>
            <person name="Mungall K."/>
            <person name="Norbertczak H."/>
            <person name="Rabbinowitsch E."/>
            <person name="Sanders M."/>
            <person name="Simmonds M."/>
            <person name="White B."/>
            <person name="Whithead S."/>
            <person name="Parkhill J."/>
        </authorList>
    </citation>
    <scope>NUCLEOTIDE SEQUENCE [LARGE SCALE GENOMIC DNA]</scope>
    <source>
        <strain>Hall / ATCC 3502 / NCTC 13319 / Type A</strain>
    </source>
</reference>
<reference key="2">
    <citation type="journal article" date="2007" name="PLoS ONE">
        <title>Analysis of the neurotoxin complex genes in Clostridium botulinum A1-A4 and B1 strains: BoNT/A3, /Ba4 and /B1 clusters are located within plasmids.</title>
        <authorList>
            <person name="Smith T.J."/>
            <person name="Hill K.K."/>
            <person name="Foley B.T."/>
            <person name="Detter J.C."/>
            <person name="Munk A.C."/>
            <person name="Bruce D.C."/>
            <person name="Doggett N.A."/>
            <person name="Smith L.A."/>
            <person name="Marks J.D."/>
            <person name="Xie G."/>
            <person name="Brettin T.S."/>
        </authorList>
    </citation>
    <scope>NUCLEOTIDE SEQUENCE [LARGE SCALE GENOMIC DNA]</scope>
    <source>
        <strain>Hall / ATCC 3502 / NCTC 13319 / Type A</strain>
    </source>
</reference>
<accession>A5I798</accession>
<accession>A7G8I1</accession>
<keyword id="KW-0021">Allosteric enzyme</keyword>
<keyword id="KW-0067">ATP-binding</keyword>
<keyword id="KW-0963">Cytoplasm</keyword>
<keyword id="KW-0324">Glycolysis</keyword>
<keyword id="KW-0418">Kinase</keyword>
<keyword id="KW-0460">Magnesium</keyword>
<keyword id="KW-0479">Metal-binding</keyword>
<keyword id="KW-0547">Nucleotide-binding</keyword>
<keyword id="KW-1185">Reference proteome</keyword>
<keyword id="KW-0808">Transferase</keyword>